<reference key="1">
    <citation type="submission" date="2006-12" db="EMBL/GenBank/DDBJ databases">
        <title>Complete sequence of Shewanella sp. W3-18-1.</title>
        <authorList>
            <consortium name="US DOE Joint Genome Institute"/>
            <person name="Copeland A."/>
            <person name="Lucas S."/>
            <person name="Lapidus A."/>
            <person name="Barry K."/>
            <person name="Detter J.C."/>
            <person name="Glavina del Rio T."/>
            <person name="Hammon N."/>
            <person name="Israni S."/>
            <person name="Dalin E."/>
            <person name="Tice H."/>
            <person name="Pitluck S."/>
            <person name="Chain P."/>
            <person name="Malfatti S."/>
            <person name="Shin M."/>
            <person name="Vergez L."/>
            <person name="Schmutz J."/>
            <person name="Larimer F."/>
            <person name="Land M."/>
            <person name="Hauser L."/>
            <person name="Kyrpides N."/>
            <person name="Lykidis A."/>
            <person name="Tiedje J."/>
            <person name="Richardson P."/>
        </authorList>
    </citation>
    <scope>NUCLEOTIDE SEQUENCE [LARGE SCALE GENOMIC DNA]</scope>
    <source>
        <strain>W3-18-1</strain>
    </source>
</reference>
<evidence type="ECO:0000255" key="1">
    <source>
        <dbReference type="HAMAP-Rule" id="MF_01852"/>
    </source>
</evidence>
<dbReference type="EC" id="2.7.7.87" evidence="1"/>
<dbReference type="EMBL" id="CP000503">
    <property type="protein sequence ID" value="ABM22882.1"/>
    <property type="molecule type" value="Genomic_DNA"/>
</dbReference>
<dbReference type="RefSeq" id="WP_011787450.1">
    <property type="nucleotide sequence ID" value="NC_008750.1"/>
</dbReference>
<dbReference type="SMR" id="A1RDY7"/>
<dbReference type="KEGG" id="shw:Sputw3181_0029"/>
<dbReference type="HOGENOM" id="CLU_031397_6_0_6"/>
<dbReference type="Proteomes" id="UP000002597">
    <property type="component" value="Chromosome"/>
</dbReference>
<dbReference type="GO" id="GO:0005737">
    <property type="term" value="C:cytoplasm"/>
    <property type="evidence" value="ECO:0007669"/>
    <property type="project" value="UniProtKB-SubCell"/>
</dbReference>
<dbReference type="GO" id="GO:0005524">
    <property type="term" value="F:ATP binding"/>
    <property type="evidence" value="ECO:0007669"/>
    <property type="project" value="UniProtKB-UniRule"/>
</dbReference>
<dbReference type="GO" id="GO:0003725">
    <property type="term" value="F:double-stranded RNA binding"/>
    <property type="evidence" value="ECO:0007669"/>
    <property type="project" value="InterPro"/>
</dbReference>
<dbReference type="GO" id="GO:0061710">
    <property type="term" value="F:L-threonylcarbamoyladenylate synthase"/>
    <property type="evidence" value="ECO:0007669"/>
    <property type="project" value="UniProtKB-EC"/>
</dbReference>
<dbReference type="GO" id="GO:0000049">
    <property type="term" value="F:tRNA binding"/>
    <property type="evidence" value="ECO:0007669"/>
    <property type="project" value="TreeGrafter"/>
</dbReference>
<dbReference type="GO" id="GO:0006450">
    <property type="term" value="P:regulation of translational fidelity"/>
    <property type="evidence" value="ECO:0007669"/>
    <property type="project" value="TreeGrafter"/>
</dbReference>
<dbReference type="GO" id="GO:0002949">
    <property type="term" value="P:tRNA threonylcarbamoyladenosine modification"/>
    <property type="evidence" value="ECO:0007669"/>
    <property type="project" value="UniProtKB-UniRule"/>
</dbReference>
<dbReference type="FunFam" id="3.90.870.10:FF:000004">
    <property type="entry name" value="Threonylcarbamoyl-AMP synthase"/>
    <property type="match status" value="1"/>
</dbReference>
<dbReference type="Gene3D" id="3.90.870.10">
    <property type="entry name" value="DHBP synthase"/>
    <property type="match status" value="1"/>
</dbReference>
<dbReference type="HAMAP" id="MF_01852">
    <property type="entry name" value="TsaC"/>
    <property type="match status" value="1"/>
</dbReference>
<dbReference type="InterPro" id="IPR017945">
    <property type="entry name" value="DHBP_synth_RibB-like_a/b_dom"/>
</dbReference>
<dbReference type="InterPro" id="IPR006070">
    <property type="entry name" value="Sua5-like_dom"/>
</dbReference>
<dbReference type="InterPro" id="IPR023535">
    <property type="entry name" value="TC-AMP_synthase"/>
</dbReference>
<dbReference type="InterPro" id="IPR050156">
    <property type="entry name" value="TC-AMP_synthase_SUA5"/>
</dbReference>
<dbReference type="NCBIfam" id="TIGR00057">
    <property type="entry name" value="L-threonylcarbamoyladenylate synthase"/>
    <property type="match status" value="1"/>
</dbReference>
<dbReference type="PANTHER" id="PTHR17490">
    <property type="entry name" value="SUA5"/>
    <property type="match status" value="1"/>
</dbReference>
<dbReference type="PANTHER" id="PTHR17490:SF18">
    <property type="entry name" value="THREONYLCARBAMOYL-AMP SYNTHASE"/>
    <property type="match status" value="1"/>
</dbReference>
<dbReference type="Pfam" id="PF01300">
    <property type="entry name" value="Sua5_yciO_yrdC"/>
    <property type="match status" value="1"/>
</dbReference>
<dbReference type="SUPFAM" id="SSF55821">
    <property type="entry name" value="YrdC/RibB"/>
    <property type="match status" value="1"/>
</dbReference>
<dbReference type="PROSITE" id="PS51163">
    <property type="entry name" value="YRDC"/>
    <property type="match status" value="1"/>
</dbReference>
<keyword id="KW-0067">ATP-binding</keyword>
<keyword id="KW-0963">Cytoplasm</keyword>
<keyword id="KW-0547">Nucleotide-binding</keyword>
<keyword id="KW-0548">Nucleotidyltransferase</keyword>
<keyword id="KW-0808">Transferase</keyword>
<keyword id="KW-0819">tRNA processing</keyword>
<comment type="function">
    <text evidence="1">Required for the formation of a threonylcarbamoyl group on adenosine at position 37 (t(6)A37) in tRNAs that read codons beginning with adenine. Catalyzes the conversion of L-threonine, HCO(3)(-)/CO(2) and ATP to give threonylcarbamoyl-AMP (TC-AMP) as the acyladenylate intermediate, with the release of diphosphate.</text>
</comment>
<comment type="catalytic activity">
    <reaction evidence="1">
        <text>L-threonine + hydrogencarbonate + ATP = L-threonylcarbamoyladenylate + diphosphate + H2O</text>
        <dbReference type="Rhea" id="RHEA:36407"/>
        <dbReference type="ChEBI" id="CHEBI:15377"/>
        <dbReference type="ChEBI" id="CHEBI:17544"/>
        <dbReference type="ChEBI" id="CHEBI:30616"/>
        <dbReference type="ChEBI" id="CHEBI:33019"/>
        <dbReference type="ChEBI" id="CHEBI:57926"/>
        <dbReference type="ChEBI" id="CHEBI:73682"/>
        <dbReference type="EC" id="2.7.7.87"/>
    </reaction>
</comment>
<comment type="subcellular location">
    <subcellularLocation>
        <location evidence="1">Cytoplasm</location>
    </subcellularLocation>
</comment>
<comment type="similarity">
    <text evidence="1">Belongs to the SUA5 family. TsaC subfamily.</text>
</comment>
<gene>
    <name evidence="1" type="primary">tsaC</name>
    <name type="synonym">rimN</name>
    <name type="ordered locus">Sputw3181_0029</name>
</gene>
<protein>
    <recommendedName>
        <fullName evidence="1">Threonylcarbamoyl-AMP synthase</fullName>
        <shortName evidence="1">TC-AMP synthase</shortName>
        <ecNumber evidence="1">2.7.7.87</ecNumber>
    </recommendedName>
    <alternativeName>
        <fullName evidence="1">L-threonylcarbamoyladenylate synthase</fullName>
    </alternativeName>
    <alternativeName>
        <fullName evidence="1">t(6)A37 threonylcarbamoyladenosine biosynthesis protein TsaC</fullName>
    </alternativeName>
    <alternativeName>
        <fullName evidence="1">tRNA threonylcarbamoyladenosine biosynthesis protein TsaC</fullName>
    </alternativeName>
</protein>
<sequence>MLQLHPSDIKDIVLNGGVIAYPTEAVYGLGCDPDNDTAIQKLLAVKQRPWQKGLILVASDFQQLLAYVDESQLTAEQLEFAFSKWPGPFTFVMPIKAQVSKYLCGEFDSIAVRVSAHAGVQALCRALNKPLVSTSANLAGEDPALTAAEILADFTGKIDALVLGELGEQRQPSTIIDARSGKILRNGQ</sequence>
<proteinExistence type="inferred from homology"/>
<organism>
    <name type="scientific">Shewanella sp. (strain W3-18-1)</name>
    <dbReference type="NCBI Taxonomy" id="351745"/>
    <lineage>
        <taxon>Bacteria</taxon>
        <taxon>Pseudomonadati</taxon>
        <taxon>Pseudomonadota</taxon>
        <taxon>Gammaproteobacteria</taxon>
        <taxon>Alteromonadales</taxon>
        <taxon>Shewanellaceae</taxon>
        <taxon>Shewanella</taxon>
    </lineage>
</organism>
<feature type="chain" id="PRO_0000352989" description="Threonylcarbamoyl-AMP synthase">
    <location>
        <begin position="1"/>
        <end position="188"/>
    </location>
</feature>
<feature type="domain" description="YrdC-like" evidence="1">
    <location>
        <begin position="3"/>
        <end position="188"/>
    </location>
</feature>
<name>TSAC_SHESW</name>
<accession>A1RDY7</accession>